<feature type="signal peptide" evidence="2">
    <location>
        <begin position="1"/>
        <end position="16"/>
    </location>
</feature>
<feature type="propeptide" id="PRO_0000032691" evidence="6 10">
    <location>
        <begin position="17"/>
        <end position="37"/>
    </location>
</feature>
<feature type="chain" id="PRO_0000032692" description="Biglycan">
    <location>
        <begin position="38"/>
        <end position="368"/>
    </location>
</feature>
<feature type="repeat" description="LRR 1">
    <location>
        <begin position="82"/>
        <end position="102"/>
    </location>
</feature>
<feature type="repeat" description="LRR 2">
    <location>
        <begin position="103"/>
        <end position="126"/>
    </location>
</feature>
<feature type="repeat" description="LRR 3">
    <location>
        <begin position="127"/>
        <end position="150"/>
    </location>
</feature>
<feature type="repeat" description="LRR 4">
    <location>
        <begin position="151"/>
        <end position="171"/>
    </location>
</feature>
<feature type="repeat" description="LRR 5">
    <location>
        <begin position="172"/>
        <end position="195"/>
    </location>
</feature>
<feature type="repeat" description="LRR 6">
    <location>
        <begin position="196"/>
        <end position="220"/>
    </location>
</feature>
<feature type="repeat" description="LRR 7">
    <location>
        <begin position="221"/>
        <end position="241"/>
    </location>
</feature>
<feature type="repeat" description="LRR 8">
    <location>
        <begin position="242"/>
        <end position="265"/>
    </location>
</feature>
<feature type="repeat" description="LRR 9">
    <location>
        <begin position="266"/>
        <end position="289"/>
    </location>
</feature>
<feature type="repeat" description="LRR 10">
    <location>
        <begin position="290"/>
        <end position="312"/>
    </location>
</feature>
<feature type="repeat" description="LRR 11">
    <location>
        <begin position="313"/>
        <end position="342"/>
    </location>
</feature>
<feature type="repeat" description="LRR 12">
    <location>
        <begin position="343"/>
        <end position="368"/>
    </location>
</feature>
<feature type="glycosylation site" description="O-linked (Xyl...) (glycosaminoglycan) serine" evidence="6 9">
    <location>
        <position position="42"/>
    </location>
</feature>
<feature type="glycosylation site" description="O-linked (Xyl...) (glycosaminoglycan) serine" evidence="6 9">
    <location>
        <position position="47"/>
    </location>
</feature>
<feature type="glycosylation site" description="O-linked (Xyl...) (glycosaminoglycan) serine" evidence="3">
    <location>
        <position position="180"/>
    </location>
</feature>
<feature type="glycosylation site" description="O-linked (Xyl...) (glycosaminoglycan) serine" evidence="3">
    <location>
        <position position="198"/>
    </location>
</feature>
<feature type="glycosylation site" description="N-linked (GlcNAc...) asparagine" evidence="5">
    <location>
        <position position="270"/>
    </location>
</feature>
<feature type="glycosylation site" description="N-linked (GlcNAc...) asparagine" evidence="5">
    <location>
        <position position="311"/>
    </location>
</feature>
<feature type="disulfide bond" evidence="1">
    <location>
        <begin position="63"/>
        <end position="69"/>
    </location>
</feature>
<feature type="disulfide bond" evidence="1">
    <location>
        <begin position="67"/>
        <end position="76"/>
    </location>
</feature>
<feature type="disulfide bond" evidence="1">
    <location>
        <begin position="321"/>
        <end position="354"/>
    </location>
</feature>
<feature type="sequence variant" id="VAR_078028" description="In MRLS; uncertain significance; dbSNP:rs886037825." evidence="8">
    <original>G</original>
    <variation>S</variation>
    <location>
        <position position="80"/>
    </location>
</feature>
<feature type="sequence variant" id="VAR_076590" description="In SEMDX; reduced protein stability; dbSNP:rs879255604." evidence="7">
    <original>K</original>
    <variation>E</variation>
    <location>
        <position position="147"/>
    </location>
</feature>
<feature type="sequence variant" id="VAR_076591" description="In SEMDX; dbSNP:rs879255605." evidence="7">
    <original>G</original>
    <variation>V</variation>
    <location>
        <position position="259"/>
    </location>
</feature>
<feature type="sequence variant" id="VAR_036605" description="In a breast cancer sample; somatic mutation." evidence="4">
    <original>R</original>
    <variation>T</variation>
    <location>
        <position position="266"/>
    </location>
</feature>
<feature type="sequence variant" id="VAR_036606" description="In a breast cancer sample; somatic mutation." evidence="4">
    <original>K</original>
    <variation>N</variation>
    <location>
        <position position="288"/>
    </location>
</feature>
<feature type="sequence variant" id="VAR_078029" description="In MRLS; uncertain significance; dbSNP:rs886037824." evidence="8">
    <original>Q</original>
    <variation>P</variation>
    <location>
        <position position="303"/>
    </location>
</feature>
<feature type="sequence conflict" description="In Ref. 1; AAA52287." evidence="11" ref="1">
    <original>KL</original>
    <variation>NV</variation>
    <location>
        <begin position="139"/>
        <end position="140"/>
    </location>
</feature>
<feature type="sequence conflict" description="In Ref. 1." evidence="11" ref="1">
    <original>EL</original>
    <variation>DV</variation>
    <location>
        <begin position="163"/>
        <end position="164"/>
    </location>
</feature>
<protein>
    <recommendedName>
        <fullName>Biglycan</fullName>
    </recommendedName>
    <alternativeName>
        <fullName>Bone/cartilage proteoglycan I</fullName>
    </alternativeName>
    <alternativeName>
        <fullName>PG-S1</fullName>
    </alternativeName>
</protein>
<reference key="1">
    <citation type="journal article" date="1989" name="J. Biol. Chem.">
        <title>Deduced protein sequence of bone small proteoglycan I (biglycan) shows homology with proteoglycan II (decorin) and several nonconnective tissue proteins in a variety of species.</title>
        <authorList>
            <person name="Fisher L.W."/>
            <person name="Termine J.D."/>
            <person name="Young M.F."/>
        </authorList>
    </citation>
    <scope>NUCLEOTIDE SEQUENCE [MRNA]</scope>
    <source>
        <tissue>Bone</tissue>
    </source>
</reference>
<reference key="2">
    <citation type="journal article" date="1991" name="J. Biol. Chem.">
        <title>Human biglycan gene. Putative promoter, intron-exon junctions, and chromosomal localization.</title>
        <authorList>
            <person name="Fisher L.W."/>
            <person name="Heegaard A.M."/>
            <person name="Vetter U."/>
            <person name="Vogel W."/>
            <person name="Just W."/>
            <person name="Termine J.D."/>
            <person name="Young M.F."/>
        </authorList>
    </citation>
    <scope>NUCLEOTIDE SEQUENCE [GENOMIC DNA]</scope>
</reference>
<reference key="3">
    <citation type="journal article" date="2000" name="Genome Res.">
        <title>Comparative genome sequence analysis of the Bpa/Str region in mouse and man.</title>
        <authorList>
            <person name="Mallon A.-M."/>
            <person name="Platzer M."/>
            <person name="Bate R."/>
            <person name="Gloeckner G."/>
            <person name="Botcherby M.R.M."/>
            <person name="Nordsiek G."/>
            <person name="Strivens M.A."/>
            <person name="Kioschis P."/>
            <person name="Dangel A."/>
            <person name="Cunningham D."/>
            <person name="Straw R.N.A."/>
            <person name="Weston P."/>
            <person name="Gilbert M."/>
            <person name="Fernando S."/>
            <person name="Goodall K."/>
            <person name="Hunter G."/>
            <person name="Greystrong J.S."/>
            <person name="Clarke D."/>
            <person name="Kimberley C."/>
            <person name="Goerdes M."/>
            <person name="Blechschmidt K."/>
            <person name="Rump A."/>
            <person name="Hinzmann B."/>
            <person name="Mundy C.R."/>
            <person name="Miller W."/>
            <person name="Poustka A."/>
            <person name="Herman G.E."/>
            <person name="Rhodes M."/>
            <person name="Denny P."/>
            <person name="Rosenthal A."/>
            <person name="Brown S.D.M."/>
        </authorList>
    </citation>
    <scope>NUCLEOTIDE SEQUENCE [LARGE SCALE GENOMIC DNA]</scope>
</reference>
<reference key="4">
    <citation type="journal article" date="2005" name="Nature">
        <title>The DNA sequence of the human X chromosome.</title>
        <authorList>
            <person name="Ross M.T."/>
            <person name="Grafham D.V."/>
            <person name="Coffey A.J."/>
            <person name="Scherer S."/>
            <person name="McLay K."/>
            <person name="Muzny D."/>
            <person name="Platzer M."/>
            <person name="Howell G.R."/>
            <person name="Burrows C."/>
            <person name="Bird C.P."/>
            <person name="Frankish A."/>
            <person name="Lovell F.L."/>
            <person name="Howe K.L."/>
            <person name="Ashurst J.L."/>
            <person name="Fulton R.S."/>
            <person name="Sudbrak R."/>
            <person name="Wen G."/>
            <person name="Jones M.C."/>
            <person name="Hurles M.E."/>
            <person name="Andrews T.D."/>
            <person name="Scott C.E."/>
            <person name="Searle S."/>
            <person name="Ramser J."/>
            <person name="Whittaker A."/>
            <person name="Deadman R."/>
            <person name="Carter N.P."/>
            <person name="Hunt S.E."/>
            <person name="Chen R."/>
            <person name="Cree A."/>
            <person name="Gunaratne P."/>
            <person name="Havlak P."/>
            <person name="Hodgson A."/>
            <person name="Metzker M.L."/>
            <person name="Richards S."/>
            <person name="Scott G."/>
            <person name="Steffen D."/>
            <person name="Sodergren E."/>
            <person name="Wheeler D.A."/>
            <person name="Worley K.C."/>
            <person name="Ainscough R."/>
            <person name="Ambrose K.D."/>
            <person name="Ansari-Lari M.A."/>
            <person name="Aradhya S."/>
            <person name="Ashwell R.I."/>
            <person name="Babbage A.K."/>
            <person name="Bagguley C.L."/>
            <person name="Ballabio A."/>
            <person name="Banerjee R."/>
            <person name="Barker G.E."/>
            <person name="Barlow K.F."/>
            <person name="Barrett I.P."/>
            <person name="Bates K.N."/>
            <person name="Beare D.M."/>
            <person name="Beasley H."/>
            <person name="Beasley O."/>
            <person name="Beck A."/>
            <person name="Bethel G."/>
            <person name="Blechschmidt K."/>
            <person name="Brady N."/>
            <person name="Bray-Allen S."/>
            <person name="Bridgeman A.M."/>
            <person name="Brown A.J."/>
            <person name="Brown M.J."/>
            <person name="Bonnin D."/>
            <person name="Bruford E.A."/>
            <person name="Buhay C."/>
            <person name="Burch P."/>
            <person name="Burford D."/>
            <person name="Burgess J."/>
            <person name="Burrill W."/>
            <person name="Burton J."/>
            <person name="Bye J.M."/>
            <person name="Carder C."/>
            <person name="Carrel L."/>
            <person name="Chako J."/>
            <person name="Chapman J.C."/>
            <person name="Chavez D."/>
            <person name="Chen E."/>
            <person name="Chen G."/>
            <person name="Chen Y."/>
            <person name="Chen Z."/>
            <person name="Chinault C."/>
            <person name="Ciccodicola A."/>
            <person name="Clark S.Y."/>
            <person name="Clarke G."/>
            <person name="Clee C.M."/>
            <person name="Clegg S."/>
            <person name="Clerc-Blankenburg K."/>
            <person name="Clifford K."/>
            <person name="Cobley V."/>
            <person name="Cole C.G."/>
            <person name="Conquer J.S."/>
            <person name="Corby N."/>
            <person name="Connor R.E."/>
            <person name="David R."/>
            <person name="Davies J."/>
            <person name="Davis C."/>
            <person name="Davis J."/>
            <person name="Delgado O."/>
            <person name="Deshazo D."/>
            <person name="Dhami P."/>
            <person name="Ding Y."/>
            <person name="Dinh H."/>
            <person name="Dodsworth S."/>
            <person name="Draper H."/>
            <person name="Dugan-Rocha S."/>
            <person name="Dunham A."/>
            <person name="Dunn M."/>
            <person name="Durbin K.J."/>
            <person name="Dutta I."/>
            <person name="Eades T."/>
            <person name="Ellwood M."/>
            <person name="Emery-Cohen A."/>
            <person name="Errington H."/>
            <person name="Evans K.L."/>
            <person name="Faulkner L."/>
            <person name="Francis F."/>
            <person name="Frankland J."/>
            <person name="Fraser A.E."/>
            <person name="Galgoczy P."/>
            <person name="Gilbert J."/>
            <person name="Gill R."/>
            <person name="Gloeckner G."/>
            <person name="Gregory S.G."/>
            <person name="Gribble S."/>
            <person name="Griffiths C."/>
            <person name="Grocock R."/>
            <person name="Gu Y."/>
            <person name="Gwilliam R."/>
            <person name="Hamilton C."/>
            <person name="Hart E.A."/>
            <person name="Hawes A."/>
            <person name="Heath P.D."/>
            <person name="Heitmann K."/>
            <person name="Hennig S."/>
            <person name="Hernandez J."/>
            <person name="Hinzmann B."/>
            <person name="Ho S."/>
            <person name="Hoffs M."/>
            <person name="Howden P.J."/>
            <person name="Huckle E.J."/>
            <person name="Hume J."/>
            <person name="Hunt P.J."/>
            <person name="Hunt A.R."/>
            <person name="Isherwood J."/>
            <person name="Jacob L."/>
            <person name="Johnson D."/>
            <person name="Jones S."/>
            <person name="de Jong P.J."/>
            <person name="Joseph S.S."/>
            <person name="Keenan S."/>
            <person name="Kelly S."/>
            <person name="Kershaw J.K."/>
            <person name="Khan Z."/>
            <person name="Kioschis P."/>
            <person name="Klages S."/>
            <person name="Knights A.J."/>
            <person name="Kosiura A."/>
            <person name="Kovar-Smith C."/>
            <person name="Laird G.K."/>
            <person name="Langford C."/>
            <person name="Lawlor S."/>
            <person name="Leversha M."/>
            <person name="Lewis L."/>
            <person name="Liu W."/>
            <person name="Lloyd C."/>
            <person name="Lloyd D.M."/>
            <person name="Loulseged H."/>
            <person name="Loveland J.E."/>
            <person name="Lovell J.D."/>
            <person name="Lozado R."/>
            <person name="Lu J."/>
            <person name="Lyne R."/>
            <person name="Ma J."/>
            <person name="Maheshwari M."/>
            <person name="Matthews L.H."/>
            <person name="McDowall J."/>
            <person name="McLaren S."/>
            <person name="McMurray A."/>
            <person name="Meidl P."/>
            <person name="Meitinger T."/>
            <person name="Milne S."/>
            <person name="Miner G."/>
            <person name="Mistry S.L."/>
            <person name="Morgan M."/>
            <person name="Morris S."/>
            <person name="Mueller I."/>
            <person name="Mullikin J.C."/>
            <person name="Nguyen N."/>
            <person name="Nordsiek G."/>
            <person name="Nyakatura G."/>
            <person name="O'dell C.N."/>
            <person name="Okwuonu G."/>
            <person name="Palmer S."/>
            <person name="Pandian R."/>
            <person name="Parker D."/>
            <person name="Parrish J."/>
            <person name="Pasternak S."/>
            <person name="Patel D."/>
            <person name="Pearce A.V."/>
            <person name="Pearson D.M."/>
            <person name="Pelan S.E."/>
            <person name="Perez L."/>
            <person name="Porter K.M."/>
            <person name="Ramsey Y."/>
            <person name="Reichwald K."/>
            <person name="Rhodes S."/>
            <person name="Ridler K.A."/>
            <person name="Schlessinger D."/>
            <person name="Schueler M.G."/>
            <person name="Sehra H.K."/>
            <person name="Shaw-Smith C."/>
            <person name="Shen H."/>
            <person name="Sheridan E.M."/>
            <person name="Shownkeen R."/>
            <person name="Skuce C.D."/>
            <person name="Smith M.L."/>
            <person name="Sotheran E.C."/>
            <person name="Steingruber H.E."/>
            <person name="Steward C.A."/>
            <person name="Storey R."/>
            <person name="Swann R.M."/>
            <person name="Swarbreck D."/>
            <person name="Tabor P.E."/>
            <person name="Taudien S."/>
            <person name="Taylor T."/>
            <person name="Teague B."/>
            <person name="Thomas K."/>
            <person name="Thorpe A."/>
            <person name="Timms K."/>
            <person name="Tracey A."/>
            <person name="Trevanion S."/>
            <person name="Tromans A.C."/>
            <person name="d'Urso M."/>
            <person name="Verduzco D."/>
            <person name="Villasana D."/>
            <person name="Waldron L."/>
            <person name="Wall M."/>
            <person name="Wang Q."/>
            <person name="Warren J."/>
            <person name="Warry G.L."/>
            <person name="Wei X."/>
            <person name="West A."/>
            <person name="Whitehead S.L."/>
            <person name="Whiteley M.N."/>
            <person name="Wilkinson J.E."/>
            <person name="Willey D.L."/>
            <person name="Williams G."/>
            <person name="Williams L."/>
            <person name="Williamson A."/>
            <person name="Williamson H."/>
            <person name="Wilming L."/>
            <person name="Woodmansey R.L."/>
            <person name="Wray P.W."/>
            <person name="Yen J."/>
            <person name="Zhang J."/>
            <person name="Zhou J."/>
            <person name="Zoghbi H."/>
            <person name="Zorilla S."/>
            <person name="Buck D."/>
            <person name="Reinhardt R."/>
            <person name="Poustka A."/>
            <person name="Rosenthal A."/>
            <person name="Lehrach H."/>
            <person name="Meindl A."/>
            <person name="Minx P.J."/>
            <person name="Hillier L.W."/>
            <person name="Willard H.F."/>
            <person name="Wilson R.K."/>
            <person name="Waterston R.H."/>
            <person name="Rice C.M."/>
            <person name="Vaudin M."/>
            <person name="Coulson A."/>
            <person name="Nelson D.L."/>
            <person name="Weinstock G."/>
            <person name="Sulston J.E."/>
            <person name="Durbin R.M."/>
            <person name="Hubbard T."/>
            <person name="Gibbs R.A."/>
            <person name="Beck S."/>
            <person name="Rogers J."/>
            <person name="Bentley D.R."/>
        </authorList>
    </citation>
    <scope>NUCLEOTIDE SEQUENCE [LARGE SCALE GENOMIC DNA]</scope>
</reference>
<reference key="5">
    <citation type="submission" date="2005-09" db="EMBL/GenBank/DDBJ databases">
        <authorList>
            <person name="Mural R.J."/>
            <person name="Istrail S."/>
            <person name="Sutton G.G."/>
            <person name="Florea L."/>
            <person name="Halpern A.L."/>
            <person name="Mobarry C.M."/>
            <person name="Lippert R."/>
            <person name="Walenz B."/>
            <person name="Shatkay H."/>
            <person name="Dew I."/>
            <person name="Miller J.R."/>
            <person name="Flanigan M.J."/>
            <person name="Edwards N.J."/>
            <person name="Bolanos R."/>
            <person name="Fasulo D."/>
            <person name="Halldorsson B.V."/>
            <person name="Hannenhalli S."/>
            <person name="Turner R."/>
            <person name="Yooseph S."/>
            <person name="Lu F."/>
            <person name="Nusskern D.R."/>
            <person name="Shue B.C."/>
            <person name="Zheng X.H."/>
            <person name="Zhong F."/>
            <person name="Delcher A.L."/>
            <person name="Huson D.H."/>
            <person name="Kravitz S.A."/>
            <person name="Mouchard L."/>
            <person name="Reinert K."/>
            <person name="Remington K.A."/>
            <person name="Clark A.G."/>
            <person name="Waterman M.S."/>
            <person name="Eichler E.E."/>
            <person name="Adams M.D."/>
            <person name="Hunkapiller M.W."/>
            <person name="Myers E.W."/>
            <person name="Venter J.C."/>
        </authorList>
    </citation>
    <scope>NUCLEOTIDE SEQUENCE [LARGE SCALE GENOMIC DNA]</scope>
</reference>
<reference key="6">
    <citation type="submission" date="2003-05" db="EMBL/GenBank/DDBJ databases">
        <title>Cloning of human full-length CDSs in BD Creator(TM) system donor vector.</title>
        <authorList>
            <person name="Kalnine N."/>
            <person name="Chen X."/>
            <person name="Rolfs A."/>
            <person name="Halleck A."/>
            <person name="Hines L."/>
            <person name="Eisenstein S."/>
            <person name="Koundinya M."/>
            <person name="Raphael J."/>
            <person name="Moreira D."/>
            <person name="Kelley T."/>
            <person name="LaBaer J."/>
            <person name="Lin Y."/>
            <person name="Phelan M."/>
            <person name="Farmer A."/>
        </authorList>
    </citation>
    <scope>NUCLEOTIDE SEQUENCE [LARGE SCALE MRNA]</scope>
</reference>
<reference key="7">
    <citation type="journal article" date="2004" name="Genome Res.">
        <title>The status, quality, and expansion of the NIH full-length cDNA project: the Mammalian Gene Collection (MGC).</title>
        <authorList>
            <consortium name="The MGC Project Team"/>
        </authorList>
    </citation>
    <scope>NUCLEOTIDE SEQUENCE [LARGE SCALE MRNA]</scope>
    <source>
        <tissue>Brain</tissue>
    </source>
</reference>
<reference key="8">
    <citation type="journal article" date="1989" name="Biochem. J.">
        <title>Dermatan sulphate proteoglycans of human articular cartilage. The properties of dermatan sulphate proteoglycans I and II.</title>
        <authorList>
            <person name="Roughley P.J."/>
            <person name="White R.J."/>
        </authorList>
    </citation>
    <scope>PROTEIN SEQUENCE OF 38-57</scope>
</reference>
<reference key="9">
    <citation type="journal article" date="1987" name="J. Biol. Chem.">
        <title>Purification and partial characterization of small proteoglycans I and II, bone sialoproteins I and II, and osteonectin from the mineral compartment of developing human bone.</title>
        <authorList>
            <person name="Fisher L.W."/>
            <person name="Hawkins G.R."/>
            <person name="Tuross N."/>
            <person name="Termine J.D."/>
        </authorList>
    </citation>
    <scope>PROTEIN SEQUENCE OF 38-66</scope>
</reference>
<reference key="10">
    <citation type="journal article" date="1994" name="Hum. Mol. Genet.">
        <title>Dinucleotide repeat polymorphism at the human biglycan (BGN) locus.</title>
        <authorList>
            <person name="Just W."/>
            <person name="Rau W."/>
            <person name="Muller R."/>
            <person name="Geerkens C."/>
            <person name="Vogel W."/>
        </authorList>
    </citation>
    <scope>NUCLEOTIDE SEQUENCE [MRNA] OF 361-368</scope>
    <source>
        <tissue>Skin</tissue>
    </source>
</reference>
<reference key="11">
    <citation type="journal article" date="2009" name="J. Proteome Res.">
        <title>Glycoproteomics analysis of human liver tissue by combination of multiple enzyme digestion and hydrazide chemistry.</title>
        <authorList>
            <person name="Chen R."/>
            <person name="Jiang X."/>
            <person name="Sun D."/>
            <person name="Han G."/>
            <person name="Wang F."/>
            <person name="Ye M."/>
            <person name="Wang L."/>
            <person name="Zou H."/>
        </authorList>
    </citation>
    <scope>GLYCOSYLATION [LARGE SCALE ANALYSIS] AT ASN-270 AND ASN-311</scope>
    <source>
        <tissue>Liver</tissue>
    </source>
</reference>
<reference key="12">
    <citation type="journal article" date="2014" name="J. Proteomics">
        <title>An enzyme assisted RP-RPLC approach for in-depth analysis of human liver phosphoproteome.</title>
        <authorList>
            <person name="Bian Y."/>
            <person name="Song C."/>
            <person name="Cheng K."/>
            <person name="Dong M."/>
            <person name="Wang F."/>
            <person name="Huang J."/>
            <person name="Sun D."/>
            <person name="Wang L."/>
            <person name="Ye M."/>
            <person name="Zou H."/>
        </authorList>
    </citation>
    <scope>IDENTIFICATION BY MASS SPECTROMETRY [LARGE SCALE ANALYSIS]</scope>
    <source>
        <tissue>Liver</tissue>
    </source>
</reference>
<reference key="13">
    <citation type="journal article" date="2020" name="Glycobiology">
        <title>An affinity chromatography and glycoproteomics workflow to profile the chondroitin sulfate proteoglycans that interact with malarial VAR2CSA in the placenta and in cancer.</title>
        <authorList>
            <person name="Toledo A.G."/>
            <person name="Pihl J."/>
            <person name="Spliid C.B."/>
            <person name="Persson A."/>
            <person name="Nilsson J."/>
            <person name="Pereira M.A."/>
            <person name="Gustavsson T."/>
            <person name="Choudhary S."/>
            <person name="Oo H.Z."/>
            <person name="Black P.C."/>
            <person name="Daugaard M."/>
            <person name="Esko J.D."/>
            <person name="Larson G."/>
            <person name="Salanti A."/>
            <person name="Clausen T.M."/>
        </authorList>
    </citation>
    <scope>TISSUE SPECIFICITY</scope>
    <scope>GLYCOSYLATION AT SER-42 AND SER-47</scope>
</reference>
<reference key="14">
    <citation type="journal article" date="2006" name="Science">
        <title>The consensus coding sequences of human breast and colorectal cancers.</title>
        <authorList>
            <person name="Sjoeblom T."/>
            <person name="Jones S."/>
            <person name="Wood L.D."/>
            <person name="Parsons D.W."/>
            <person name="Lin J."/>
            <person name="Barber T.D."/>
            <person name="Mandelker D."/>
            <person name="Leary R.J."/>
            <person name="Ptak J."/>
            <person name="Silliman N."/>
            <person name="Szabo S."/>
            <person name="Buckhaults P."/>
            <person name="Farrell C."/>
            <person name="Meeh P."/>
            <person name="Markowitz S.D."/>
            <person name="Willis J."/>
            <person name="Dawson D."/>
            <person name="Willson J.K.V."/>
            <person name="Gazdar A.F."/>
            <person name="Hartigan J."/>
            <person name="Wu L."/>
            <person name="Liu C."/>
            <person name="Parmigiani G."/>
            <person name="Park B.H."/>
            <person name="Bachman K.E."/>
            <person name="Papadopoulos N."/>
            <person name="Vogelstein B."/>
            <person name="Kinzler K.W."/>
            <person name="Velculescu V.E."/>
        </authorList>
    </citation>
    <scope>VARIANTS [LARGE SCALE ANALYSIS] THR-266 AND ASN-288</scope>
</reference>
<reference key="15">
    <citation type="journal article" date="2016" name="Am. J. Hum. Genet.">
        <title>BGN mutations in X-linked spondyloepimetaphyseal dysplasia.</title>
        <authorList>
            <person name="Cho S.Y."/>
            <person name="Bae J.S."/>
            <person name="Kim N.K."/>
            <person name="Forzano F."/>
            <person name="Girisha K.M."/>
            <person name="Baldo C."/>
            <person name="Faravelli F."/>
            <person name="Cho T.J."/>
            <person name="Kim D."/>
            <person name="Lee K.Y."/>
            <person name="Ikegawa S."/>
            <person name="Shim J.S."/>
            <person name="Ko A.R."/>
            <person name="Miyake N."/>
            <person name="Nishimura G."/>
            <person name="Superti-Furga A."/>
            <person name="Spranger J."/>
            <person name="Kim O.H."/>
            <person name="Park W.Y."/>
            <person name="Jin D.K."/>
        </authorList>
    </citation>
    <scope>INVOLVEMENT IN SEMDX</scope>
    <scope>VARIANTS SEMDX GLU-147 AND VAL-259</scope>
    <scope>CHARACTERIZATION OF VARIANTS SEMDX GLU-147</scope>
</reference>
<reference key="16">
    <citation type="journal article" date="2017" name="Genet. Med.">
        <title>Loss-of-function mutations in the X-linked biglycan gene cause a severe syndromic form of thoracic aortic aneurysms and dissections.</title>
        <authorList>
            <person name="Meester J.A."/>
            <person name="Vandeweyer G."/>
            <person name="Pintelon I."/>
            <person name="Lammens M."/>
            <person name="Van Hoorick L."/>
            <person name="De Belder S."/>
            <person name="Waitzman K."/>
            <person name="Young L."/>
            <person name="Markham L.W."/>
            <person name="Vogt J."/>
            <person name="Richer J."/>
            <person name="Beauchesne L.M."/>
            <person name="Unger S."/>
            <person name="Superti-Furga A."/>
            <person name="Prsa M."/>
            <person name="Dhillon R."/>
            <person name="Reyniers E."/>
            <person name="Dietz H.C."/>
            <person name="Wuyts W."/>
            <person name="Mortier G."/>
            <person name="Verstraeten A."/>
            <person name="Van Laer L."/>
            <person name="Loeys B.L."/>
        </authorList>
    </citation>
    <scope>VARIANTS MRLS SER-80 AND PRO-303</scope>
    <scope>INVOLVEMENT IN MRLS</scope>
</reference>
<keyword id="KW-0993">Aortic aneurysm</keyword>
<keyword id="KW-0903">Direct protein sequencing</keyword>
<keyword id="KW-0225">Disease variant</keyword>
<keyword id="KW-1015">Disulfide bond</keyword>
<keyword id="KW-0242">Dwarfism</keyword>
<keyword id="KW-0272">Extracellular matrix</keyword>
<keyword id="KW-0325">Glycoprotein</keyword>
<keyword id="KW-0433">Leucine-rich repeat</keyword>
<keyword id="KW-0654">Proteoglycan</keyword>
<keyword id="KW-1267">Proteomics identification</keyword>
<keyword id="KW-1185">Reference proteome</keyword>
<keyword id="KW-0677">Repeat</keyword>
<keyword id="KW-0964">Secreted</keyword>
<keyword id="KW-0732">Signal</keyword>
<sequence>MWPLWRLVSLLALSQALPFEQRGFWDFTLDDGPFMMNDEEASGADTSGVLDPDSVTPTYSAMCPFGCHCHLRVVQCSDLGLKSVPKEISPDTTLLDLQNNDISELRKDDFKGLQHLYALVLVNNKISKIHEKAFSPLRKLQKLYISKNHLVEIPPNLPSSLVELRIHDNRIRKVPKGVFSGLRNMNCIEMGGNPLENSGFEPGAFDGLKLNYLRISEAKLTGIPKDLPETLNELHLDHNKIQAIELEDLLRYSKLYRLGLGHNQIRMIENGSLSFLPTLRELHLDNNKLARVPSGLPDLKLLQVVYLHSNNITKVGVNDFCPMGFGVKRAYYNGISLFNNPVPYWEVQPATFRCVTDRLAIQFGNYKK</sequence>
<gene>
    <name type="primary">BGN</name>
    <name type="synonym">SLRR1A</name>
</gene>
<evidence type="ECO:0000250" key="1"/>
<evidence type="ECO:0000250" key="2">
    <source>
        <dbReference type="UniProtKB" id="P47853"/>
    </source>
</evidence>
<evidence type="ECO:0000255" key="3"/>
<evidence type="ECO:0000269" key="4">
    <source>
    </source>
</evidence>
<evidence type="ECO:0000269" key="5">
    <source>
    </source>
</evidence>
<evidence type="ECO:0000269" key="6">
    <source>
    </source>
</evidence>
<evidence type="ECO:0000269" key="7">
    <source>
    </source>
</evidence>
<evidence type="ECO:0000269" key="8">
    <source>
    </source>
</evidence>
<evidence type="ECO:0000269" key="9">
    <source>
    </source>
</evidence>
<evidence type="ECO:0000269" key="10">
    <source>
    </source>
</evidence>
<evidence type="ECO:0000305" key="11"/>
<proteinExistence type="evidence at protein level"/>
<organism>
    <name type="scientific">Homo sapiens</name>
    <name type="common">Human</name>
    <dbReference type="NCBI Taxonomy" id="9606"/>
    <lineage>
        <taxon>Eukaryota</taxon>
        <taxon>Metazoa</taxon>
        <taxon>Chordata</taxon>
        <taxon>Craniata</taxon>
        <taxon>Vertebrata</taxon>
        <taxon>Euteleostomi</taxon>
        <taxon>Mammalia</taxon>
        <taxon>Eutheria</taxon>
        <taxon>Euarchontoglires</taxon>
        <taxon>Primates</taxon>
        <taxon>Haplorrhini</taxon>
        <taxon>Catarrhini</taxon>
        <taxon>Hominidae</taxon>
        <taxon>Homo</taxon>
    </lineage>
</organism>
<accession>P21810</accession>
<accession>D3DWU3</accession>
<accession>P13247</accession>
<comment type="function">
    <text evidence="1">May be involved in collagen fiber assembly.</text>
</comment>
<comment type="subunit">
    <text evidence="1">Homodimer. Forms a ternary complex with MFAP2 and ELN (By similarity).</text>
</comment>
<comment type="interaction">
    <interactant intactId="EBI-762076">
        <id>P21810</id>
    </interactant>
    <interactant intactId="EBI-1001144">
        <id>Q9H410</id>
        <label>DSN1</label>
    </interactant>
    <organismsDiffer>false</organismsDiffer>
    <experiments>3</experiments>
</comment>
<comment type="interaction">
    <interactant intactId="EBI-762076">
        <id>P21810</id>
    </interactant>
    <interactant intactId="EBI-1055254">
        <id>Q8WXH2</id>
        <label>JPH3</label>
    </interactant>
    <organismsDiffer>false</organismsDiffer>
    <experiments>3</experiments>
</comment>
<comment type="interaction">
    <interactant intactId="EBI-762076">
        <id>P21810</id>
    </interactant>
    <interactant intactId="EBI-741037">
        <id>Q9BRK4</id>
        <label>LZTS2</label>
    </interactant>
    <organismsDiffer>false</organismsDiffer>
    <experiments>4</experiments>
</comment>
<comment type="interaction">
    <interactant intactId="EBI-762076">
        <id>P21810</id>
    </interactant>
    <interactant intactId="EBI-21503705">
        <id>Q58EX7-2</id>
        <label>PLEKHG4</label>
    </interactant>
    <organismsDiffer>false</organismsDiffer>
    <experiments>3</experiments>
</comment>
<comment type="interaction">
    <interactant intactId="EBI-762076">
        <id>P21810</id>
    </interactant>
    <interactant intactId="EBI-11141397">
        <id>Q9UBQ0-2</id>
        <label>VPS29</label>
    </interactant>
    <organismsDiffer>false</organismsDiffer>
    <experiments>3</experiments>
</comment>
<comment type="subcellular location">
    <subcellularLocation>
        <location evidence="1">Secreted</location>
        <location evidence="1">Extracellular space</location>
        <location evidence="1">Extracellular matrix</location>
    </subcellularLocation>
</comment>
<comment type="tissue specificity">
    <text evidence="9">Detected in placenta (at protein level) (PubMed:32337544). Found in several connective tissues, especially in articular cartilages.</text>
</comment>
<comment type="PTM">
    <text evidence="1">The two attached glycosaminoglycan chains can be either chondroitin sulfate or dermatan sulfate.</text>
</comment>
<comment type="disease" evidence="8">
    <disease id="DI-04917">
        <name>Meester-Loeys syndrome</name>
        <acronym>MRLS</acronym>
        <description>An X-linked, thoracic aortic aneurysm syndrome characterized by early-onset, severe aortic aneurysm and dissection. Other recurrent findings include hypertelorism, pectus deformity, joint hypermobility, contractures, and mild skeletal dysplasia.</description>
        <dbReference type="MIM" id="300989"/>
    </disease>
    <text>The disease is caused by variants affecting the gene represented in this entry.</text>
</comment>
<comment type="disease" evidence="7">
    <disease id="DI-04786">
        <name>Spondyloepimetaphyseal dysplasia, X-linked</name>
        <acronym>SEMDX</acronym>
        <description>An X-linked recessive bone disease characterized by severe short-trunk dwarfism, brachydactyly, metaphyseal flaring of lower extremities, short and broad long bone diaphyses, moderate platyspondyly, normal facies, and normal intelligence.</description>
        <dbReference type="MIM" id="300106"/>
    </disease>
    <text>The disease is caused by variants affecting the gene represented in this entry.</text>
</comment>
<comment type="similarity">
    <text evidence="11">Belongs to the small leucine-rich proteoglycan (SLRP) family. SLRP class I subfamily.</text>
</comment>
<dbReference type="EMBL" id="J04599">
    <property type="protein sequence ID" value="AAA36009.1"/>
    <property type="molecule type" value="mRNA"/>
</dbReference>
<dbReference type="EMBL" id="M65153">
    <property type="protein sequence ID" value="AAA52287.1"/>
    <property type="status" value="ALT_SEQ"/>
    <property type="molecule type" value="Genomic_DNA"/>
</dbReference>
<dbReference type="EMBL" id="M65152">
    <property type="protein sequence ID" value="AAA52287.1"/>
    <property type="status" value="JOINED"/>
    <property type="molecule type" value="Genomic_DNA"/>
</dbReference>
<dbReference type="EMBL" id="U82695">
    <property type="status" value="NOT_ANNOTATED_CDS"/>
    <property type="molecule type" value="Genomic_DNA"/>
</dbReference>
<dbReference type="EMBL" id="BT007323">
    <property type="protein sequence ID" value="AAP35987.1"/>
    <property type="molecule type" value="mRNA"/>
</dbReference>
<dbReference type="EMBL" id="CH471172">
    <property type="protein sequence ID" value="EAW72863.1"/>
    <property type="molecule type" value="Genomic_DNA"/>
</dbReference>
<dbReference type="EMBL" id="CH471172">
    <property type="protein sequence ID" value="EAW72864.1"/>
    <property type="molecule type" value="Genomic_DNA"/>
</dbReference>
<dbReference type="EMBL" id="BC002416">
    <property type="protein sequence ID" value="AAH02416.1"/>
    <property type="molecule type" value="mRNA"/>
</dbReference>
<dbReference type="EMBL" id="BC004244">
    <property type="protein sequence ID" value="AAH04244.1"/>
    <property type="molecule type" value="mRNA"/>
</dbReference>
<dbReference type="EMBL" id="U11686">
    <property type="protein sequence ID" value="AAC50117.1"/>
    <property type="molecule type" value="mRNA"/>
</dbReference>
<dbReference type="CCDS" id="CCDS14721.1"/>
<dbReference type="PIR" id="A40757">
    <property type="entry name" value="BGHUN"/>
</dbReference>
<dbReference type="RefSeq" id="NP_001702.1">
    <property type="nucleotide sequence ID" value="NM_001711.6"/>
</dbReference>
<dbReference type="RefSeq" id="XP_016885213.1">
    <property type="nucleotide sequence ID" value="XM_017029724.3"/>
</dbReference>
<dbReference type="RefSeq" id="XP_054183538.1">
    <property type="nucleotide sequence ID" value="XM_054327563.1"/>
</dbReference>
<dbReference type="SMR" id="P21810"/>
<dbReference type="BioGRID" id="107102">
    <property type="interactions" value="19"/>
</dbReference>
<dbReference type="CORUM" id="P21810"/>
<dbReference type="FunCoup" id="P21810">
    <property type="interactions" value="88"/>
</dbReference>
<dbReference type="IntAct" id="P21810">
    <property type="interactions" value="20"/>
</dbReference>
<dbReference type="MINT" id="P21810"/>
<dbReference type="STRING" id="9606.ENSP00000327336"/>
<dbReference type="GlyConnect" id="1042">
    <property type="glycosylation" value="92 N-Linked glycans (2 sites)"/>
</dbReference>
<dbReference type="GlyCosmos" id="P21810">
    <property type="glycosylation" value="8 sites, 109 glycans"/>
</dbReference>
<dbReference type="GlyGen" id="P21810">
    <property type="glycosylation" value="10 sites, 272 N-linked glycans (2 sites), 2 O-linked glycans (3 sites)"/>
</dbReference>
<dbReference type="iPTMnet" id="P21810"/>
<dbReference type="PhosphoSitePlus" id="P21810"/>
<dbReference type="BioMuta" id="BGN"/>
<dbReference type="DMDM" id="266762"/>
<dbReference type="jPOST" id="P21810"/>
<dbReference type="MassIVE" id="P21810"/>
<dbReference type="PaxDb" id="9606-ENSP00000327336"/>
<dbReference type="PeptideAtlas" id="P21810"/>
<dbReference type="ProteomicsDB" id="53928"/>
<dbReference type="Antibodypedia" id="558">
    <property type="antibodies" value="409 antibodies from 37 providers"/>
</dbReference>
<dbReference type="DNASU" id="633"/>
<dbReference type="Ensembl" id="ENST00000331595.9">
    <property type="protein sequence ID" value="ENSP00000327336.4"/>
    <property type="gene ID" value="ENSG00000182492.16"/>
</dbReference>
<dbReference type="GeneID" id="633"/>
<dbReference type="KEGG" id="hsa:633"/>
<dbReference type="MANE-Select" id="ENST00000331595.9">
    <property type="protein sequence ID" value="ENSP00000327336.4"/>
    <property type="RefSeq nucleotide sequence ID" value="NM_001711.6"/>
    <property type="RefSeq protein sequence ID" value="NP_001702.1"/>
</dbReference>
<dbReference type="UCSC" id="uc004fhr.3">
    <property type="organism name" value="human"/>
</dbReference>
<dbReference type="AGR" id="HGNC:1044"/>
<dbReference type="CTD" id="633"/>
<dbReference type="DisGeNET" id="633"/>
<dbReference type="GeneCards" id="BGN"/>
<dbReference type="GeneReviews" id="BGN"/>
<dbReference type="HGNC" id="HGNC:1044">
    <property type="gene designation" value="BGN"/>
</dbReference>
<dbReference type="HPA" id="ENSG00000182492">
    <property type="expression patterns" value="Tissue enhanced (heart)"/>
</dbReference>
<dbReference type="MalaCards" id="BGN"/>
<dbReference type="MIM" id="300106">
    <property type="type" value="phenotype"/>
</dbReference>
<dbReference type="MIM" id="300989">
    <property type="type" value="phenotype"/>
</dbReference>
<dbReference type="MIM" id="301870">
    <property type="type" value="gene"/>
</dbReference>
<dbReference type="neXtProt" id="NX_P21810"/>
<dbReference type="OpenTargets" id="ENSG00000182492"/>
<dbReference type="Orphanet" id="622925">
    <property type="disease" value="X-linked severe syndromic thoracic aortic aneurysm and dissection"/>
</dbReference>
<dbReference type="Orphanet" id="93349">
    <property type="disease" value="X-linked spondyloepimetaphyseal dysplasia"/>
</dbReference>
<dbReference type="PharmGKB" id="PA25346"/>
<dbReference type="VEuPathDB" id="HostDB:ENSG00000182492"/>
<dbReference type="eggNOG" id="KOG0619">
    <property type="taxonomic scope" value="Eukaryota"/>
</dbReference>
<dbReference type="GeneTree" id="ENSGT00940000155311"/>
<dbReference type="HOGENOM" id="CLU_000288_186_0_1"/>
<dbReference type="InParanoid" id="P21810"/>
<dbReference type="OMA" id="VEMRIHE"/>
<dbReference type="OrthoDB" id="1111193at2759"/>
<dbReference type="PAN-GO" id="P21810">
    <property type="GO annotations" value="1 GO annotation based on evolutionary models"/>
</dbReference>
<dbReference type="PhylomeDB" id="P21810"/>
<dbReference type="TreeFam" id="TF334562"/>
<dbReference type="PathwayCommons" id="P21810"/>
<dbReference type="Reactome" id="R-HSA-1971475">
    <property type="pathway name" value="A tetrasaccharide linker sequence is required for GAG synthesis"/>
</dbReference>
<dbReference type="Reactome" id="R-HSA-2022870">
    <property type="pathway name" value="Chondroitin sulfate biosynthesis"/>
</dbReference>
<dbReference type="Reactome" id="R-HSA-2022923">
    <property type="pathway name" value="Dermatan sulfate biosynthesis"/>
</dbReference>
<dbReference type="Reactome" id="R-HSA-2024101">
    <property type="pathway name" value="CS/DS degradation"/>
</dbReference>
<dbReference type="Reactome" id="R-HSA-3000178">
    <property type="pathway name" value="ECM proteoglycans"/>
</dbReference>
<dbReference type="Reactome" id="R-HSA-3560783">
    <property type="pathway name" value="Defective B4GALT7 causes EDS, progeroid type"/>
</dbReference>
<dbReference type="Reactome" id="R-HSA-3560801">
    <property type="pathway name" value="Defective B3GAT3 causes JDSSDHD"/>
</dbReference>
<dbReference type="Reactome" id="R-HSA-3595172">
    <property type="pathway name" value="Defective CHST3 causes SEDCJD"/>
</dbReference>
<dbReference type="Reactome" id="R-HSA-3595174">
    <property type="pathway name" value="Defective CHST14 causes EDS, musculocontractural type"/>
</dbReference>
<dbReference type="Reactome" id="R-HSA-3595177">
    <property type="pathway name" value="Defective CHSY1 causes TPBS"/>
</dbReference>
<dbReference type="Reactome" id="R-HSA-4420332">
    <property type="pathway name" value="Defective B3GALT6 causes EDSP2 and SEMDJL1"/>
</dbReference>
<dbReference type="SignaLink" id="P21810"/>
<dbReference type="SIGNOR" id="P21810"/>
<dbReference type="BioGRID-ORCS" id="633">
    <property type="hits" value="18 hits in 782 CRISPR screens"/>
</dbReference>
<dbReference type="ChiTaRS" id="BGN">
    <property type="organism name" value="human"/>
</dbReference>
<dbReference type="GeneWiki" id="Biglycan"/>
<dbReference type="GenomeRNAi" id="633"/>
<dbReference type="Pharos" id="P21810">
    <property type="development level" value="Tbio"/>
</dbReference>
<dbReference type="PRO" id="PR:P21810"/>
<dbReference type="Proteomes" id="UP000005640">
    <property type="component" value="Chromosome X"/>
</dbReference>
<dbReference type="RNAct" id="P21810">
    <property type="molecule type" value="protein"/>
</dbReference>
<dbReference type="Bgee" id="ENSG00000182492">
    <property type="expression patterns" value="Expressed in descending thoracic aorta and 189 other cell types or tissues"/>
</dbReference>
<dbReference type="ExpressionAtlas" id="P21810">
    <property type="expression patterns" value="baseline and differential"/>
</dbReference>
<dbReference type="GO" id="GO:0009986">
    <property type="term" value="C:cell surface"/>
    <property type="evidence" value="ECO:0000314"/>
    <property type="project" value="MGI"/>
</dbReference>
<dbReference type="GO" id="GO:0062023">
    <property type="term" value="C:collagen-containing extracellular matrix"/>
    <property type="evidence" value="ECO:0007005"/>
    <property type="project" value="BHF-UCL"/>
</dbReference>
<dbReference type="GO" id="GO:0070062">
    <property type="term" value="C:extracellular exosome"/>
    <property type="evidence" value="ECO:0007005"/>
    <property type="project" value="UniProtKB"/>
</dbReference>
<dbReference type="GO" id="GO:0031012">
    <property type="term" value="C:extracellular matrix"/>
    <property type="evidence" value="ECO:0000303"/>
    <property type="project" value="UniProtKB"/>
</dbReference>
<dbReference type="GO" id="GO:0005576">
    <property type="term" value="C:extracellular region"/>
    <property type="evidence" value="ECO:0007005"/>
    <property type="project" value="BHF-UCL"/>
</dbReference>
<dbReference type="GO" id="GO:0005615">
    <property type="term" value="C:extracellular space"/>
    <property type="evidence" value="ECO:0000318"/>
    <property type="project" value="GO_Central"/>
</dbReference>
<dbReference type="GO" id="GO:0005796">
    <property type="term" value="C:Golgi lumen"/>
    <property type="evidence" value="ECO:0000304"/>
    <property type="project" value="Reactome"/>
</dbReference>
<dbReference type="GO" id="GO:0043202">
    <property type="term" value="C:lysosomal lumen"/>
    <property type="evidence" value="ECO:0000304"/>
    <property type="project" value="Reactome"/>
</dbReference>
<dbReference type="GO" id="GO:0042383">
    <property type="term" value="C:sarcolemma"/>
    <property type="evidence" value="ECO:0007669"/>
    <property type="project" value="Ensembl"/>
</dbReference>
<dbReference type="GO" id="GO:0030133">
    <property type="term" value="C:transport vesicle"/>
    <property type="evidence" value="ECO:0000314"/>
    <property type="project" value="LIFEdb"/>
</dbReference>
<dbReference type="GO" id="GO:0019955">
    <property type="term" value="F:cytokine binding"/>
    <property type="evidence" value="ECO:0007669"/>
    <property type="project" value="Ensembl"/>
</dbReference>
<dbReference type="GO" id="GO:0050840">
    <property type="term" value="F:extracellular matrix binding"/>
    <property type="evidence" value="ECO:0007669"/>
    <property type="project" value="Ensembl"/>
</dbReference>
<dbReference type="GO" id="GO:0005201">
    <property type="term" value="F:extracellular matrix structural constituent"/>
    <property type="evidence" value="ECO:0000303"/>
    <property type="project" value="UniProtKB"/>
</dbReference>
<dbReference type="GO" id="GO:0030021">
    <property type="term" value="F:extracellular matrix structural constituent conferring compression resistance"/>
    <property type="evidence" value="ECO:0000250"/>
    <property type="project" value="BHF-UCL"/>
</dbReference>
<dbReference type="GO" id="GO:0005539">
    <property type="term" value="F:glycosaminoglycan binding"/>
    <property type="evidence" value="ECO:0007669"/>
    <property type="project" value="Ensembl"/>
</dbReference>
<dbReference type="GO" id="GO:0061975">
    <property type="term" value="P:articular cartilage development"/>
    <property type="evidence" value="ECO:0007669"/>
    <property type="project" value="Ensembl"/>
</dbReference>
<dbReference type="GO" id="GO:0001974">
    <property type="term" value="P:blood vessel remodeling"/>
    <property type="evidence" value="ECO:0007669"/>
    <property type="project" value="Ensembl"/>
</dbReference>
<dbReference type="GO" id="GO:0060348">
    <property type="term" value="P:bone development"/>
    <property type="evidence" value="ECO:0007669"/>
    <property type="project" value="Ensembl"/>
</dbReference>
<dbReference type="FunFam" id="3.80.10.10:FF:000038">
    <property type="entry name" value="Biglycan"/>
    <property type="match status" value="1"/>
</dbReference>
<dbReference type="Gene3D" id="3.80.10.10">
    <property type="entry name" value="Ribonuclease Inhibitor"/>
    <property type="match status" value="1"/>
</dbReference>
<dbReference type="InterPro" id="IPR001611">
    <property type="entry name" value="Leu-rich_rpt"/>
</dbReference>
<dbReference type="InterPro" id="IPR003591">
    <property type="entry name" value="Leu-rich_rpt_typical-subtyp"/>
</dbReference>
<dbReference type="InterPro" id="IPR032675">
    <property type="entry name" value="LRR_dom_sf"/>
</dbReference>
<dbReference type="InterPro" id="IPR000372">
    <property type="entry name" value="LRRNT"/>
</dbReference>
<dbReference type="InterPro" id="IPR050333">
    <property type="entry name" value="SLRP"/>
</dbReference>
<dbReference type="InterPro" id="IPR016352">
    <property type="entry name" value="SLRP_I_decor/aspor/byglycan"/>
</dbReference>
<dbReference type="PANTHER" id="PTHR45712">
    <property type="entry name" value="AGAP008170-PA"/>
    <property type="match status" value="1"/>
</dbReference>
<dbReference type="PANTHER" id="PTHR45712:SF11">
    <property type="entry name" value="BIGLYCAN"/>
    <property type="match status" value="1"/>
</dbReference>
<dbReference type="Pfam" id="PF13855">
    <property type="entry name" value="LRR_8"/>
    <property type="match status" value="3"/>
</dbReference>
<dbReference type="Pfam" id="PF01462">
    <property type="entry name" value="LRRNT"/>
    <property type="match status" value="1"/>
</dbReference>
<dbReference type="PIRSF" id="PIRSF002490">
    <property type="entry name" value="SLRP_I"/>
    <property type="match status" value="1"/>
</dbReference>
<dbReference type="SMART" id="SM00369">
    <property type="entry name" value="LRR_TYP"/>
    <property type="match status" value="8"/>
</dbReference>
<dbReference type="SMART" id="SM00013">
    <property type="entry name" value="LRRNT"/>
    <property type="match status" value="1"/>
</dbReference>
<dbReference type="SUPFAM" id="SSF52058">
    <property type="entry name" value="L domain-like"/>
    <property type="match status" value="1"/>
</dbReference>
<dbReference type="PROSITE" id="PS51450">
    <property type="entry name" value="LRR"/>
    <property type="match status" value="8"/>
</dbReference>
<name>PGS1_HUMAN</name>